<name>Y807_PETMO</name>
<evidence type="ECO:0000255" key="1">
    <source>
        <dbReference type="HAMAP-Rule" id="MF_00693"/>
    </source>
</evidence>
<evidence type="ECO:0000256" key="2">
    <source>
        <dbReference type="SAM" id="MobiDB-lite"/>
    </source>
</evidence>
<protein>
    <recommendedName>
        <fullName evidence="1">Probable transcriptional regulatory protein Pmob_0807</fullName>
    </recommendedName>
</protein>
<dbReference type="EMBL" id="CP000879">
    <property type="protein sequence ID" value="ABX31531.1"/>
    <property type="molecule type" value="Genomic_DNA"/>
</dbReference>
<dbReference type="RefSeq" id="WP_012208634.1">
    <property type="nucleotide sequence ID" value="NC_010003.1"/>
</dbReference>
<dbReference type="SMR" id="A9BHC2"/>
<dbReference type="STRING" id="403833.Pmob_0807"/>
<dbReference type="KEGG" id="pmo:Pmob_0807"/>
<dbReference type="eggNOG" id="COG0217">
    <property type="taxonomic scope" value="Bacteria"/>
</dbReference>
<dbReference type="HOGENOM" id="CLU_062974_2_2_0"/>
<dbReference type="OrthoDB" id="9781053at2"/>
<dbReference type="Proteomes" id="UP000000789">
    <property type="component" value="Chromosome"/>
</dbReference>
<dbReference type="GO" id="GO:0005829">
    <property type="term" value="C:cytosol"/>
    <property type="evidence" value="ECO:0007669"/>
    <property type="project" value="TreeGrafter"/>
</dbReference>
<dbReference type="GO" id="GO:0003677">
    <property type="term" value="F:DNA binding"/>
    <property type="evidence" value="ECO:0007669"/>
    <property type="project" value="UniProtKB-UniRule"/>
</dbReference>
<dbReference type="GO" id="GO:0006355">
    <property type="term" value="P:regulation of DNA-templated transcription"/>
    <property type="evidence" value="ECO:0007669"/>
    <property type="project" value="UniProtKB-UniRule"/>
</dbReference>
<dbReference type="FunFam" id="1.10.10.200:FF:000001">
    <property type="entry name" value="Probable transcriptional regulatory protein YebC"/>
    <property type="match status" value="1"/>
</dbReference>
<dbReference type="FunFam" id="3.30.70.980:FF:000002">
    <property type="entry name" value="Probable transcriptional regulatory protein YebC"/>
    <property type="match status" value="1"/>
</dbReference>
<dbReference type="Gene3D" id="1.10.10.200">
    <property type="match status" value="1"/>
</dbReference>
<dbReference type="Gene3D" id="3.30.70.980">
    <property type="match status" value="2"/>
</dbReference>
<dbReference type="HAMAP" id="MF_00693">
    <property type="entry name" value="Transcrip_reg_TACO1"/>
    <property type="match status" value="1"/>
</dbReference>
<dbReference type="InterPro" id="IPR017856">
    <property type="entry name" value="Integrase-like_N"/>
</dbReference>
<dbReference type="InterPro" id="IPR048300">
    <property type="entry name" value="TACO1_YebC-like_2nd/3rd_dom"/>
</dbReference>
<dbReference type="InterPro" id="IPR049083">
    <property type="entry name" value="TACO1_YebC_N"/>
</dbReference>
<dbReference type="InterPro" id="IPR002876">
    <property type="entry name" value="Transcrip_reg_TACO1-like"/>
</dbReference>
<dbReference type="InterPro" id="IPR026564">
    <property type="entry name" value="Transcrip_reg_TACO1-like_dom3"/>
</dbReference>
<dbReference type="InterPro" id="IPR029072">
    <property type="entry name" value="YebC-like"/>
</dbReference>
<dbReference type="NCBIfam" id="NF001030">
    <property type="entry name" value="PRK00110.1"/>
    <property type="match status" value="1"/>
</dbReference>
<dbReference type="NCBIfam" id="NF009044">
    <property type="entry name" value="PRK12378.1"/>
    <property type="match status" value="1"/>
</dbReference>
<dbReference type="NCBIfam" id="TIGR01033">
    <property type="entry name" value="YebC/PmpR family DNA-binding transcriptional regulator"/>
    <property type="match status" value="1"/>
</dbReference>
<dbReference type="PANTHER" id="PTHR12532:SF6">
    <property type="entry name" value="TRANSCRIPTIONAL REGULATORY PROTEIN YEBC-RELATED"/>
    <property type="match status" value="1"/>
</dbReference>
<dbReference type="PANTHER" id="PTHR12532">
    <property type="entry name" value="TRANSLATIONAL ACTIVATOR OF CYTOCHROME C OXIDASE 1"/>
    <property type="match status" value="1"/>
</dbReference>
<dbReference type="Pfam" id="PF20772">
    <property type="entry name" value="TACO1_YebC_N"/>
    <property type="match status" value="1"/>
</dbReference>
<dbReference type="Pfam" id="PF01709">
    <property type="entry name" value="Transcrip_reg"/>
    <property type="match status" value="1"/>
</dbReference>
<dbReference type="SUPFAM" id="SSF75625">
    <property type="entry name" value="YebC-like"/>
    <property type="match status" value="1"/>
</dbReference>
<accession>A9BHC2</accession>
<reference key="1">
    <citation type="submission" date="2007-11" db="EMBL/GenBank/DDBJ databases">
        <title>Complete sequence of Petroga mobilis SJ95.</title>
        <authorList>
            <consortium name="US DOE Joint Genome Institute"/>
            <person name="Copeland A."/>
            <person name="Lucas S."/>
            <person name="Lapidus A."/>
            <person name="Barry K."/>
            <person name="Glavina del Rio T."/>
            <person name="Dalin E."/>
            <person name="Tice H."/>
            <person name="Pitluck S."/>
            <person name="Meincke L."/>
            <person name="Brettin T."/>
            <person name="Bruce D."/>
            <person name="Detter J.C."/>
            <person name="Han C."/>
            <person name="Kuske C.R."/>
            <person name="Schmutz J."/>
            <person name="Larimer F."/>
            <person name="Land M."/>
            <person name="Hauser L."/>
            <person name="Kyrpides N."/>
            <person name="Mikhailova N."/>
            <person name="Noll K."/>
            <person name="Richardson P."/>
        </authorList>
    </citation>
    <scope>NUCLEOTIDE SEQUENCE [LARGE SCALE GENOMIC DNA]</scope>
    <source>
        <strain>DSM 10674 / SJ95</strain>
    </source>
</reference>
<comment type="subcellular location">
    <subcellularLocation>
        <location evidence="1">Cytoplasm</location>
    </subcellularLocation>
</comment>
<comment type="similarity">
    <text evidence="1">Belongs to the TACO1 family.</text>
</comment>
<gene>
    <name type="ordered locus">Pmob_0807</name>
</gene>
<feature type="chain" id="PRO_1000083163" description="Probable transcriptional regulatory protein Pmob_0807">
    <location>
        <begin position="1"/>
        <end position="251"/>
    </location>
</feature>
<feature type="region of interest" description="Disordered" evidence="2">
    <location>
        <begin position="1"/>
        <end position="22"/>
    </location>
</feature>
<sequence length="251" mass="27695">MSGHNKWANIKHRKGAQDAKRSQMFTKLIRELTIAAREGGGDPESNPRLRTAVENAKAANMPKDKIESAIKKGTGELEGEELTEIMYEAYGPGGVALLISVVTDNKNRTAQEVRHVLSKWGGALAESGSVSWNFERKGLITIPKEEVEDIDELMLLAVEAGAEDLDENTDPLEIITAPENLTQVRNALKEAGYTVSEKLTFLPKTTVKLSDEDAEKLLKLLNALDDMDDVQEVFGNYEIDDEVMERLAANI</sequence>
<keyword id="KW-0963">Cytoplasm</keyword>
<keyword id="KW-0238">DNA-binding</keyword>
<keyword id="KW-0804">Transcription</keyword>
<keyword id="KW-0805">Transcription regulation</keyword>
<organism>
    <name type="scientific">Petrotoga mobilis (strain DSM 10674 / SJ95)</name>
    <dbReference type="NCBI Taxonomy" id="403833"/>
    <lineage>
        <taxon>Bacteria</taxon>
        <taxon>Thermotogati</taxon>
        <taxon>Thermotogota</taxon>
        <taxon>Thermotogae</taxon>
        <taxon>Petrotogales</taxon>
        <taxon>Petrotogaceae</taxon>
        <taxon>Petrotoga</taxon>
    </lineage>
</organism>
<proteinExistence type="inferred from homology"/>